<keyword id="KW-0067">ATP-binding</keyword>
<keyword id="KW-0418">Kinase</keyword>
<keyword id="KW-0547">Nucleotide-binding</keyword>
<keyword id="KW-1185">Reference proteome</keyword>
<keyword id="KW-0808">Transferase</keyword>
<feature type="chain" id="PRO_0000156149" description="2-phosphoglycerate kinase">
    <location>
        <begin position="1"/>
        <end position="309"/>
    </location>
</feature>
<feature type="domain" description="ATP-cone" evidence="1">
    <location>
        <begin position="5"/>
        <end position="92"/>
    </location>
</feature>
<organism>
    <name type="scientific">Methanocaldococcus jannaschii (strain ATCC 43067 / DSM 2661 / JAL-1 / JCM 10045 / NBRC 100440)</name>
    <name type="common">Methanococcus jannaschii</name>
    <dbReference type="NCBI Taxonomy" id="243232"/>
    <lineage>
        <taxon>Archaea</taxon>
        <taxon>Methanobacteriati</taxon>
        <taxon>Methanobacteriota</taxon>
        <taxon>Methanomada group</taxon>
        <taxon>Methanococci</taxon>
        <taxon>Methanococcales</taxon>
        <taxon>Methanocaldococcaceae</taxon>
        <taxon>Methanocaldococcus</taxon>
    </lineage>
</organism>
<sequence length="309" mass="35545">MDLQNDIIVRGKSYEMPFSKGILARSLTAAGLKPSIAYRIAWDIYEMLKKENIRVIDKADLRRRVYYYLISKNYDEVAKKYLLWRMVLGRRPIVILIGGASGVGTSTIAFEIASRLGIPSVIGTDSIREVMRKVISRDLIPTLYESSYTAWKVLRDDEGNKYIKGFERHSEAVLTGVEGVIDRCLVEGQSVIIEGTHLVPTLLKDKYLENSHVVFIMLTIYNEELHKMRFYARGRVSSRPTERYLKYFKIIRMINDYMVETAKKKGIPVVENIKISETVDKCLNIITERLKTMIELEGLSEEDMLEEGL</sequence>
<name>PGK2_METJA</name>
<dbReference type="EC" id="2.7.2.16" evidence="1"/>
<dbReference type="EMBL" id="L77117">
    <property type="protein sequence ID" value="AAB99494.1"/>
    <property type="molecule type" value="Genomic_DNA"/>
</dbReference>
<dbReference type="PIR" id="A64485">
    <property type="entry name" value="A64485"/>
</dbReference>
<dbReference type="RefSeq" id="WP_010871004.1">
    <property type="nucleotide sequence ID" value="NC_000909.1"/>
</dbReference>
<dbReference type="SMR" id="Q58877"/>
<dbReference type="STRING" id="243232.MJ_1482"/>
<dbReference type="PaxDb" id="243232-MJ_1482"/>
<dbReference type="EnsemblBacteria" id="AAB99494">
    <property type="protein sequence ID" value="AAB99494"/>
    <property type="gene ID" value="MJ_1482"/>
</dbReference>
<dbReference type="GeneID" id="1452388"/>
<dbReference type="KEGG" id="mja:MJ_1482"/>
<dbReference type="eggNOG" id="arCOG01967">
    <property type="taxonomic scope" value="Archaea"/>
</dbReference>
<dbReference type="HOGENOM" id="CLU_848909_0_0_2"/>
<dbReference type="InParanoid" id="Q58877"/>
<dbReference type="OrthoDB" id="358692at2157"/>
<dbReference type="PhylomeDB" id="Q58877"/>
<dbReference type="UniPathway" id="UPA00551">
    <property type="reaction ID" value="UER00609"/>
</dbReference>
<dbReference type="Proteomes" id="UP000000805">
    <property type="component" value="Chromosome"/>
</dbReference>
<dbReference type="GO" id="GO:0005524">
    <property type="term" value="F:ATP binding"/>
    <property type="evidence" value="ECO:0007669"/>
    <property type="project" value="UniProtKB-KW"/>
</dbReference>
<dbReference type="GO" id="GO:0016301">
    <property type="term" value="F:kinase activity"/>
    <property type="evidence" value="ECO:0007669"/>
    <property type="project" value="UniProtKB-KW"/>
</dbReference>
<dbReference type="GO" id="GO:0016774">
    <property type="term" value="F:phosphotransferase activity, carboxyl group as acceptor"/>
    <property type="evidence" value="ECO:0007669"/>
    <property type="project" value="UniProtKB-UniRule"/>
</dbReference>
<dbReference type="Gene3D" id="3.40.50.300">
    <property type="entry name" value="P-loop containing nucleotide triphosphate hydrolases"/>
    <property type="match status" value="1"/>
</dbReference>
<dbReference type="HAMAP" id="MF_00769">
    <property type="entry name" value="2PGK"/>
    <property type="match status" value="1"/>
</dbReference>
<dbReference type="InterPro" id="IPR020872">
    <property type="entry name" value="2PKG"/>
</dbReference>
<dbReference type="InterPro" id="IPR005144">
    <property type="entry name" value="ATP-cone_dom"/>
</dbReference>
<dbReference type="InterPro" id="IPR027417">
    <property type="entry name" value="P-loop_NTPase"/>
</dbReference>
<dbReference type="NCBIfam" id="NF003259">
    <property type="entry name" value="PRK04220.1"/>
    <property type="match status" value="1"/>
</dbReference>
<dbReference type="PANTHER" id="PTHR33477">
    <property type="entry name" value="P-LOOP NTPASE DOMAIN-CONTAINING PROTEIN LPA1 HOMOLOG 1"/>
    <property type="match status" value="1"/>
</dbReference>
<dbReference type="PANTHER" id="PTHR33477:SF3">
    <property type="entry name" value="P-LOOP NTPASE DOMAIN-CONTAINING PROTEIN LPA1 HOMOLOG 1"/>
    <property type="match status" value="1"/>
</dbReference>
<dbReference type="Pfam" id="PF03477">
    <property type="entry name" value="ATP-cone"/>
    <property type="match status" value="1"/>
</dbReference>
<dbReference type="SUPFAM" id="SSF52540">
    <property type="entry name" value="P-loop containing nucleoside triphosphate hydrolases"/>
    <property type="match status" value="1"/>
</dbReference>
<dbReference type="PROSITE" id="PS51161">
    <property type="entry name" value="ATP_CONE"/>
    <property type="match status" value="1"/>
</dbReference>
<protein>
    <recommendedName>
        <fullName evidence="1">2-phosphoglycerate kinase</fullName>
        <shortName evidence="1">2PGK</shortName>
        <ecNumber evidence="1">2.7.2.16</ecNumber>
    </recommendedName>
</protein>
<gene>
    <name evidence="1" type="primary">pgk2</name>
    <name type="ordered locus">MJ1482</name>
</gene>
<comment type="function">
    <text evidence="1">Catalyzes the phosphorylation of 2-phosphoglycerate to 2,3-diphosphoglycerate. Involved in the biosynthesis of cyclic 2,3-bisphosphoglycerate, a thermoprotectant.</text>
</comment>
<comment type="catalytic activity">
    <reaction evidence="1">
        <text>(2R)-2-phosphoglycerate + ATP = (2R)-2,3-bisphosphoglycerate + ADP + H(+)</text>
        <dbReference type="Rhea" id="RHEA:42408"/>
        <dbReference type="ChEBI" id="CHEBI:15378"/>
        <dbReference type="ChEBI" id="CHEBI:30616"/>
        <dbReference type="ChEBI" id="CHEBI:58248"/>
        <dbReference type="ChEBI" id="CHEBI:58289"/>
        <dbReference type="ChEBI" id="CHEBI:456216"/>
        <dbReference type="EC" id="2.7.2.16"/>
    </reaction>
</comment>
<comment type="cofactor">
    <cofactor evidence="1">
        <name>a divalent metal cation</name>
        <dbReference type="ChEBI" id="CHEBI:60240"/>
    </cofactor>
</comment>
<comment type="pathway">
    <text evidence="1">Thermoadapter biosynthesis; cyclic 2,3-diphosphoglycerate biosynthesis; cyclic 2,3-diphosphoglycerate from 2-phospho-D-glycerate: step 1/2.</text>
</comment>
<comment type="similarity">
    <text evidence="1">Belongs to the 2-phosphoglycerate kinase family.</text>
</comment>
<reference key="1">
    <citation type="journal article" date="1996" name="Science">
        <title>Complete genome sequence of the methanogenic archaeon, Methanococcus jannaschii.</title>
        <authorList>
            <person name="Bult C.J."/>
            <person name="White O."/>
            <person name="Olsen G.J."/>
            <person name="Zhou L."/>
            <person name="Fleischmann R.D."/>
            <person name="Sutton G.G."/>
            <person name="Blake J.A."/>
            <person name="FitzGerald L.M."/>
            <person name="Clayton R.A."/>
            <person name="Gocayne J.D."/>
            <person name="Kerlavage A.R."/>
            <person name="Dougherty B.A."/>
            <person name="Tomb J.-F."/>
            <person name="Adams M.D."/>
            <person name="Reich C.I."/>
            <person name="Overbeek R."/>
            <person name="Kirkness E.F."/>
            <person name="Weinstock K.G."/>
            <person name="Merrick J.M."/>
            <person name="Glodek A."/>
            <person name="Scott J.L."/>
            <person name="Geoghagen N.S.M."/>
            <person name="Weidman J.F."/>
            <person name="Fuhrmann J.L."/>
            <person name="Nguyen D."/>
            <person name="Utterback T.R."/>
            <person name="Kelley J.M."/>
            <person name="Peterson J.D."/>
            <person name="Sadow P.W."/>
            <person name="Hanna M.C."/>
            <person name="Cotton M.D."/>
            <person name="Roberts K.M."/>
            <person name="Hurst M.A."/>
            <person name="Kaine B.P."/>
            <person name="Borodovsky M."/>
            <person name="Klenk H.-P."/>
            <person name="Fraser C.M."/>
            <person name="Smith H.O."/>
            <person name="Woese C.R."/>
            <person name="Venter J.C."/>
        </authorList>
    </citation>
    <scope>NUCLEOTIDE SEQUENCE [LARGE SCALE GENOMIC DNA]</scope>
    <source>
        <strain>ATCC 43067 / DSM 2661 / JAL-1 / JCM 10045 / NBRC 100440</strain>
    </source>
</reference>
<evidence type="ECO:0000255" key="1">
    <source>
        <dbReference type="HAMAP-Rule" id="MF_00769"/>
    </source>
</evidence>
<accession>Q58877</accession>
<proteinExistence type="inferred from homology"/>